<protein>
    <recommendedName>
        <fullName evidence="1">Carbamoyl phosphate synthase large chain</fullName>
        <ecNumber evidence="1">6.3.4.16</ecNumber>
        <ecNumber evidence="1">6.3.5.5</ecNumber>
    </recommendedName>
    <alternativeName>
        <fullName evidence="1">Carbamoyl phosphate synthetase ammonia chain</fullName>
    </alternativeName>
</protein>
<feature type="chain" id="PRO_1000085557" description="Carbamoyl phosphate synthase large chain">
    <location>
        <begin position="1"/>
        <end position="1066"/>
    </location>
</feature>
<feature type="domain" description="ATP-grasp 1" evidence="1">
    <location>
        <begin position="133"/>
        <end position="327"/>
    </location>
</feature>
<feature type="domain" description="ATP-grasp 2" evidence="1">
    <location>
        <begin position="673"/>
        <end position="863"/>
    </location>
</feature>
<feature type="domain" description="MGS-like" evidence="1">
    <location>
        <begin position="932"/>
        <end position="1066"/>
    </location>
</feature>
<feature type="region of interest" description="Carboxyphosphate synthetic domain" evidence="1">
    <location>
        <begin position="1"/>
        <end position="401"/>
    </location>
</feature>
<feature type="region of interest" description="Oligomerization domain" evidence="1">
    <location>
        <begin position="402"/>
        <end position="547"/>
    </location>
</feature>
<feature type="region of interest" description="Carbamoyl phosphate synthetic domain" evidence="1">
    <location>
        <begin position="548"/>
        <end position="931"/>
    </location>
</feature>
<feature type="region of interest" description="Allosteric domain" evidence="1">
    <location>
        <begin position="932"/>
        <end position="1066"/>
    </location>
</feature>
<feature type="binding site" evidence="1">
    <location>
        <position position="129"/>
    </location>
    <ligand>
        <name>ATP</name>
        <dbReference type="ChEBI" id="CHEBI:30616"/>
        <label>1</label>
    </ligand>
</feature>
<feature type="binding site" evidence="1">
    <location>
        <position position="169"/>
    </location>
    <ligand>
        <name>ATP</name>
        <dbReference type="ChEBI" id="CHEBI:30616"/>
        <label>1</label>
    </ligand>
</feature>
<feature type="binding site" evidence="1">
    <location>
        <position position="175"/>
    </location>
    <ligand>
        <name>ATP</name>
        <dbReference type="ChEBI" id="CHEBI:30616"/>
        <label>1</label>
    </ligand>
</feature>
<feature type="binding site" evidence="1">
    <location>
        <position position="176"/>
    </location>
    <ligand>
        <name>ATP</name>
        <dbReference type="ChEBI" id="CHEBI:30616"/>
        <label>1</label>
    </ligand>
</feature>
<feature type="binding site" evidence="1">
    <location>
        <position position="208"/>
    </location>
    <ligand>
        <name>ATP</name>
        <dbReference type="ChEBI" id="CHEBI:30616"/>
        <label>1</label>
    </ligand>
</feature>
<feature type="binding site" evidence="1">
    <location>
        <position position="210"/>
    </location>
    <ligand>
        <name>ATP</name>
        <dbReference type="ChEBI" id="CHEBI:30616"/>
        <label>1</label>
    </ligand>
</feature>
<feature type="binding site" evidence="1">
    <location>
        <position position="215"/>
    </location>
    <ligand>
        <name>ATP</name>
        <dbReference type="ChEBI" id="CHEBI:30616"/>
        <label>1</label>
    </ligand>
</feature>
<feature type="binding site" evidence="1">
    <location>
        <position position="241"/>
    </location>
    <ligand>
        <name>ATP</name>
        <dbReference type="ChEBI" id="CHEBI:30616"/>
        <label>1</label>
    </ligand>
</feature>
<feature type="binding site" evidence="1">
    <location>
        <position position="242"/>
    </location>
    <ligand>
        <name>ATP</name>
        <dbReference type="ChEBI" id="CHEBI:30616"/>
        <label>1</label>
    </ligand>
</feature>
<feature type="binding site" evidence="1">
    <location>
        <position position="243"/>
    </location>
    <ligand>
        <name>ATP</name>
        <dbReference type="ChEBI" id="CHEBI:30616"/>
        <label>1</label>
    </ligand>
</feature>
<feature type="binding site" evidence="1">
    <location>
        <position position="284"/>
    </location>
    <ligand>
        <name>ATP</name>
        <dbReference type="ChEBI" id="CHEBI:30616"/>
        <label>1</label>
    </ligand>
</feature>
<feature type="binding site" evidence="1">
    <location>
        <position position="284"/>
    </location>
    <ligand>
        <name>Mg(2+)</name>
        <dbReference type="ChEBI" id="CHEBI:18420"/>
        <label>1</label>
    </ligand>
</feature>
<feature type="binding site" evidence="1">
    <location>
        <position position="284"/>
    </location>
    <ligand>
        <name>Mn(2+)</name>
        <dbReference type="ChEBI" id="CHEBI:29035"/>
        <label>1</label>
    </ligand>
</feature>
<feature type="binding site" evidence="1">
    <location>
        <position position="298"/>
    </location>
    <ligand>
        <name>ATP</name>
        <dbReference type="ChEBI" id="CHEBI:30616"/>
        <label>1</label>
    </ligand>
</feature>
<feature type="binding site" evidence="1">
    <location>
        <position position="298"/>
    </location>
    <ligand>
        <name>Mg(2+)</name>
        <dbReference type="ChEBI" id="CHEBI:18420"/>
        <label>1</label>
    </ligand>
</feature>
<feature type="binding site" evidence="1">
    <location>
        <position position="298"/>
    </location>
    <ligand>
        <name>Mg(2+)</name>
        <dbReference type="ChEBI" id="CHEBI:18420"/>
        <label>2</label>
    </ligand>
</feature>
<feature type="binding site" evidence="1">
    <location>
        <position position="298"/>
    </location>
    <ligand>
        <name>Mn(2+)</name>
        <dbReference type="ChEBI" id="CHEBI:29035"/>
        <label>1</label>
    </ligand>
</feature>
<feature type="binding site" evidence="1">
    <location>
        <position position="298"/>
    </location>
    <ligand>
        <name>Mn(2+)</name>
        <dbReference type="ChEBI" id="CHEBI:29035"/>
        <label>2</label>
    </ligand>
</feature>
<feature type="binding site" evidence="1">
    <location>
        <position position="300"/>
    </location>
    <ligand>
        <name>Mg(2+)</name>
        <dbReference type="ChEBI" id="CHEBI:18420"/>
        <label>2</label>
    </ligand>
</feature>
<feature type="binding site" evidence="1">
    <location>
        <position position="300"/>
    </location>
    <ligand>
        <name>Mn(2+)</name>
        <dbReference type="ChEBI" id="CHEBI:29035"/>
        <label>2</label>
    </ligand>
</feature>
<feature type="binding site" evidence="1">
    <location>
        <position position="709"/>
    </location>
    <ligand>
        <name>ATP</name>
        <dbReference type="ChEBI" id="CHEBI:30616"/>
        <label>2</label>
    </ligand>
</feature>
<feature type="binding site" evidence="1">
    <location>
        <position position="748"/>
    </location>
    <ligand>
        <name>ATP</name>
        <dbReference type="ChEBI" id="CHEBI:30616"/>
        <label>2</label>
    </ligand>
</feature>
<feature type="binding site" evidence="1">
    <location>
        <position position="750"/>
    </location>
    <ligand>
        <name>ATP</name>
        <dbReference type="ChEBI" id="CHEBI:30616"/>
        <label>2</label>
    </ligand>
</feature>
<feature type="binding site" evidence="1">
    <location>
        <position position="754"/>
    </location>
    <ligand>
        <name>ATP</name>
        <dbReference type="ChEBI" id="CHEBI:30616"/>
        <label>2</label>
    </ligand>
</feature>
<feature type="binding site" evidence="1">
    <location>
        <position position="779"/>
    </location>
    <ligand>
        <name>ATP</name>
        <dbReference type="ChEBI" id="CHEBI:30616"/>
        <label>2</label>
    </ligand>
</feature>
<feature type="binding site" evidence="1">
    <location>
        <position position="780"/>
    </location>
    <ligand>
        <name>ATP</name>
        <dbReference type="ChEBI" id="CHEBI:30616"/>
        <label>2</label>
    </ligand>
</feature>
<feature type="binding site" evidence="1">
    <location>
        <position position="781"/>
    </location>
    <ligand>
        <name>ATP</name>
        <dbReference type="ChEBI" id="CHEBI:30616"/>
        <label>2</label>
    </ligand>
</feature>
<feature type="binding site" evidence="1">
    <location>
        <position position="782"/>
    </location>
    <ligand>
        <name>ATP</name>
        <dbReference type="ChEBI" id="CHEBI:30616"/>
        <label>2</label>
    </ligand>
</feature>
<feature type="binding site" evidence="1">
    <location>
        <position position="822"/>
    </location>
    <ligand>
        <name>ATP</name>
        <dbReference type="ChEBI" id="CHEBI:30616"/>
        <label>2</label>
    </ligand>
</feature>
<feature type="binding site" evidence="1">
    <location>
        <position position="822"/>
    </location>
    <ligand>
        <name>Mg(2+)</name>
        <dbReference type="ChEBI" id="CHEBI:18420"/>
        <label>3</label>
    </ligand>
</feature>
<feature type="binding site" evidence="1">
    <location>
        <position position="822"/>
    </location>
    <ligand>
        <name>Mn(2+)</name>
        <dbReference type="ChEBI" id="CHEBI:29035"/>
        <label>3</label>
    </ligand>
</feature>
<feature type="binding site" evidence="1">
    <location>
        <position position="834"/>
    </location>
    <ligand>
        <name>ATP</name>
        <dbReference type="ChEBI" id="CHEBI:30616"/>
        <label>2</label>
    </ligand>
</feature>
<feature type="binding site" evidence="1">
    <location>
        <position position="834"/>
    </location>
    <ligand>
        <name>Mg(2+)</name>
        <dbReference type="ChEBI" id="CHEBI:18420"/>
        <label>3</label>
    </ligand>
</feature>
<feature type="binding site" evidence="1">
    <location>
        <position position="834"/>
    </location>
    <ligand>
        <name>Mg(2+)</name>
        <dbReference type="ChEBI" id="CHEBI:18420"/>
        <label>4</label>
    </ligand>
</feature>
<feature type="binding site" evidence="1">
    <location>
        <position position="834"/>
    </location>
    <ligand>
        <name>Mn(2+)</name>
        <dbReference type="ChEBI" id="CHEBI:29035"/>
        <label>3</label>
    </ligand>
</feature>
<feature type="binding site" evidence="1">
    <location>
        <position position="834"/>
    </location>
    <ligand>
        <name>Mn(2+)</name>
        <dbReference type="ChEBI" id="CHEBI:29035"/>
        <label>4</label>
    </ligand>
</feature>
<feature type="binding site" evidence="1">
    <location>
        <position position="836"/>
    </location>
    <ligand>
        <name>Mg(2+)</name>
        <dbReference type="ChEBI" id="CHEBI:18420"/>
        <label>4</label>
    </ligand>
</feature>
<feature type="binding site" evidence="1">
    <location>
        <position position="836"/>
    </location>
    <ligand>
        <name>Mn(2+)</name>
        <dbReference type="ChEBI" id="CHEBI:29035"/>
        <label>4</label>
    </ligand>
</feature>
<keyword id="KW-0028">Amino-acid biosynthesis</keyword>
<keyword id="KW-0055">Arginine biosynthesis</keyword>
<keyword id="KW-0067">ATP-binding</keyword>
<keyword id="KW-0436">Ligase</keyword>
<keyword id="KW-0460">Magnesium</keyword>
<keyword id="KW-0464">Manganese</keyword>
<keyword id="KW-0479">Metal-binding</keyword>
<keyword id="KW-0547">Nucleotide-binding</keyword>
<keyword id="KW-0665">Pyrimidine biosynthesis</keyword>
<keyword id="KW-1185">Reference proteome</keyword>
<keyword id="KW-0677">Repeat</keyword>
<proteinExistence type="inferred from homology"/>
<evidence type="ECO:0000255" key="1">
    <source>
        <dbReference type="HAMAP-Rule" id="MF_01210"/>
    </source>
</evidence>
<dbReference type="EC" id="6.3.4.16" evidence="1"/>
<dbReference type="EC" id="6.3.5.5" evidence="1"/>
<dbReference type="EMBL" id="CP000885">
    <property type="protein sequence ID" value="ABX40928.1"/>
    <property type="molecule type" value="Genomic_DNA"/>
</dbReference>
<dbReference type="RefSeq" id="WP_012198572.1">
    <property type="nucleotide sequence ID" value="NC_010001.1"/>
</dbReference>
<dbReference type="SMR" id="A9KI94"/>
<dbReference type="STRING" id="357809.Cphy_0541"/>
<dbReference type="KEGG" id="cpy:Cphy_0541"/>
<dbReference type="eggNOG" id="COG0458">
    <property type="taxonomic scope" value="Bacteria"/>
</dbReference>
<dbReference type="HOGENOM" id="CLU_000513_1_0_9"/>
<dbReference type="OrthoDB" id="9804197at2"/>
<dbReference type="UniPathway" id="UPA00068">
    <property type="reaction ID" value="UER00171"/>
</dbReference>
<dbReference type="UniPathway" id="UPA00070">
    <property type="reaction ID" value="UER00115"/>
</dbReference>
<dbReference type="Proteomes" id="UP000000370">
    <property type="component" value="Chromosome"/>
</dbReference>
<dbReference type="GO" id="GO:0005737">
    <property type="term" value="C:cytoplasm"/>
    <property type="evidence" value="ECO:0007669"/>
    <property type="project" value="TreeGrafter"/>
</dbReference>
<dbReference type="GO" id="GO:0005524">
    <property type="term" value="F:ATP binding"/>
    <property type="evidence" value="ECO:0007669"/>
    <property type="project" value="UniProtKB-UniRule"/>
</dbReference>
<dbReference type="GO" id="GO:0004087">
    <property type="term" value="F:carbamoyl-phosphate synthase (ammonia) activity"/>
    <property type="evidence" value="ECO:0007669"/>
    <property type="project" value="RHEA"/>
</dbReference>
<dbReference type="GO" id="GO:0004088">
    <property type="term" value="F:carbamoyl-phosphate synthase (glutamine-hydrolyzing) activity"/>
    <property type="evidence" value="ECO:0007669"/>
    <property type="project" value="UniProtKB-UniRule"/>
</dbReference>
<dbReference type="GO" id="GO:0046872">
    <property type="term" value="F:metal ion binding"/>
    <property type="evidence" value="ECO:0007669"/>
    <property type="project" value="UniProtKB-KW"/>
</dbReference>
<dbReference type="GO" id="GO:0044205">
    <property type="term" value="P:'de novo' UMP biosynthetic process"/>
    <property type="evidence" value="ECO:0007669"/>
    <property type="project" value="UniProtKB-UniRule"/>
</dbReference>
<dbReference type="GO" id="GO:0006541">
    <property type="term" value="P:glutamine metabolic process"/>
    <property type="evidence" value="ECO:0007669"/>
    <property type="project" value="TreeGrafter"/>
</dbReference>
<dbReference type="GO" id="GO:0006526">
    <property type="term" value="P:L-arginine biosynthetic process"/>
    <property type="evidence" value="ECO:0007669"/>
    <property type="project" value="UniProtKB-UniRule"/>
</dbReference>
<dbReference type="CDD" id="cd01424">
    <property type="entry name" value="MGS_CPS_II"/>
    <property type="match status" value="1"/>
</dbReference>
<dbReference type="FunFam" id="1.10.1030.10:FF:000002">
    <property type="entry name" value="Carbamoyl-phosphate synthase large chain"/>
    <property type="match status" value="1"/>
</dbReference>
<dbReference type="FunFam" id="3.30.470.20:FF:000001">
    <property type="entry name" value="Carbamoyl-phosphate synthase large chain"/>
    <property type="match status" value="1"/>
</dbReference>
<dbReference type="FunFam" id="3.30.470.20:FF:000026">
    <property type="entry name" value="Carbamoyl-phosphate synthase large chain"/>
    <property type="match status" value="1"/>
</dbReference>
<dbReference type="FunFam" id="3.40.50.20:FF:000001">
    <property type="entry name" value="Carbamoyl-phosphate synthase large chain"/>
    <property type="match status" value="2"/>
</dbReference>
<dbReference type="Gene3D" id="3.40.50.20">
    <property type="match status" value="2"/>
</dbReference>
<dbReference type="Gene3D" id="3.30.1490.20">
    <property type="entry name" value="ATP-grasp fold, A domain"/>
    <property type="match status" value="1"/>
</dbReference>
<dbReference type="Gene3D" id="3.30.470.20">
    <property type="entry name" value="ATP-grasp fold, B domain"/>
    <property type="match status" value="2"/>
</dbReference>
<dbReference type="Gene3D" id="1.10.1030.10">
    <property type="entry name" value="Carbamoyl-phosphate synthetase, large subunit oligomerisation domain"/>
    <property type="match status" value="1"/>
</dbReference>
<dbReference type="Gene3D" id="3.40.50.1380">
    <property type="entry name" value="Methylglyoxal synthase-like domain"/>
    <property type="match status" value="1"/>
</dbReference>
<dbReference type="HAMAP" id="MF_01210_B">
    <property type="entry name" value="CPSase_L_chain_B"/>
    <property type="match status" value="1"/>
</dbReference>
<dbReference type="InterPro" id="IPR011761">
    <property type="entry name" value="ATP-grasp"/>
</dbReference>
<dbReference type="InterPro" id="IPR013815">
    <property type="entry name" value="ATP_grasp_subdomain_1"/>
</dbReference>
<dbReference type="InterPro" id="IPR006275">
    <property type="entry name" value="CarbamoylP_synth_lsu"/>
</dbReference>
<dbReference type="InterPro" id="IPR005480">
    <property type="entry name" value="CarbamoylP_synth_lsu_oligo"/>
</dbReference>
<dbReference type="InterPro" id="IPR036897">
    <property type="entry name" value="CarbamoylP_synth_lsu_oligo_sf"/>
</dbReference>
<dbReference type="InterPro" id="IPR005479">
    <property type="entry name" value="CbamoylP_synth_lsu-like_ATP-bd"/>
</dbReference>
<dbReference type="InterPro" id="IPR005483">
    <property type="entry name" value="CbamoylP_synth_lsu_CPSase_dom"/>
</dbReference>
<dbReference type="InterPro" id="IPR011607">
    <property type="entry name" value="MGS-like_dom"/>
</dbReference>
<dbReference type="InterPro" id="IPR036914">
    <property type="entry name" value="MGS-like_dom_sf"/>
</dbReference>
<dbReference type="InterPro" id="IPR033937">
    <property type="entry name" value="MGS_CPS_CarB"/>
</dbReference>
<dbReference type="InterPro" id="IPR016185">
    <property type="entry name" value="PreATP-grasp_dom_sf"/>
</dbReference>
<dbReference type="NCBIfam" id="TIGR01369">
    <property type="entry name" value="CPSaseII_lrg"/>
    <property type="match status" value="1"/>
</dbReference>
<dbReference type="NCBIfam" id="NF003671">
    <property type="entry name" value="PRK05294.1"/>
    <property type="match status" value="1"/>
</dbReference>
<dbReference type="NCBIfam" id="NF009455">
    <property type="entry name" value="PRK12815.1"/>
    <property type="match status" value="1"/>
</dbReference>
<dbReference type="PANTHER" id="PTHR11405:SF53">
    <property type="entry name" value="CARBAMOYL-PHOSPHATE SYNTHASE [AMMONIA], MITOCHONDRIAL"/>
    <property type="match status" value="1"/>
</dbReference>
<dbReference type="PANTHER" id="PTHR11405">
    <property type="entry name" value="CARBAMOYLTRANSFERASE FAMILY MEMBER"/>
    <property type="match status" value="1"/>
</dbReference>
<dbReference type="Pfam" id="PF02786">
    <property type="entry name" value="CPSase_L_D2"/>
    <property type="match status" value="2"/>
</dbReference>
<dbReference type="Pfam" id="PF02787">
    <property type="entry name" value="CPSase_L_D3"/>
    <property type="match status" value="1"/>
</dbReference>
<dbReference type="Pfam" id="PF02142">
    <property type="entry name" value="MGS"/>
    <property type="match status" value="1"/>
</dbReference>
<dbReference type="PRINTS" id="PR00098">
    <property type="entry name" value="CPSASE"/>
</dbReference>
<dbReference type="SMART" id="SM01096">
    <property type="entry name" value="CPSase_L_D3"/>
    <property type="match status" value="1"/>
</dbReference>
<dbReference type="SMART" id="SM00851">
    <property type="entry name" value="MGS"/>
    <property type="match status" value="1"/>
</dbReference>
<dbReference type="SUPFAM" id="SSF48108">
    <property type="entry name" value="Carbamoyl phosphate synthetase, large subunit connection domain"/>
    <property type="match status" value="1"/>
</dbReference>
<dbReference type="SUPFAM" id="SSF56059">
    <property type="entry name" value="Glutathione synthetase ATP-binding domain-like"/>
    <property type="match status" value="2"/>
</dbReference>
<dbReference type="SUPFAM" id="SSF52335">
    <property type="entry name" value="Methylglyoxal synthase-like"/>
    <property type="match status" value="1"/>
</dbReference>
<dbReference type="SUPFAM" id="SSF52440">
    <property type="entry name" value="PreATP-grasp domain"/>
    <property type="match status" value="2"/>
</dbReference>
<dbReference type="PROSITE" id="PS50975">
    <property type="entry name" value="ATP_GRASP"/>
    <property type="match status" value="2"/>
</dbReference>
<dbReference type="PROSITE" id="PS00866">
    <property type="entry name" value="CPSASE_1"/>
    <property type="match status" value="2"/>
</dbReference>
<dbReference type="PROSITE" id="PS00867">
    <property type="entry name" value="CPSASE_2"/>
    <property type="match status" value="2"/>
</dbReference>
<dbReference type="PROSITE" id="PS51855">
    <property type="entry name" value="MGS"/>
    <property type="match status" value="1"/>
</dbReference>
<name>CARB_LACP7</name>
<gene>
    <name evidence="1" type="primary">carB</name>
    <name type="ordered locus">Cphy_0541</name>
</gene>
<accession>A9KI94</accession>
<sequence length="1066" mass="116718">MPKNNNIKKVLVIGSGPIVIGQAAEFDYAGTQACRSLKEEGVTVVLVNSNPATIMTDKDIADMVYIEPLTPDVVKKIILKEKPDSVLPTLGGQAALNIAMELEESGFLAETGTKLIGTTSLTIKKAEDRLEFKNTMEKIGEPCAASVVVTTVPAAVDFAETIGYPVVIRPAYTLGGSGGGIAADKEELIDICTNGLRLSRVGQCLIERCIAGWKEIEYEVMRDGAGNCITVCNMENLDPVGVHTGDSIVVAPSQTLSDKEYQMLRTSALNIITEINITGGCNVQYALKPDSFEYCVIEVNPRVSRSSALASKATGYPIAKVAAKIALGYTLDEIPNAITGKTVASFEPALDYCVVKIPKWPFDKFIMAKRTLTTQMKATGEVMSICTNFEGALMKAVRSLEQNIYSMNYGDYSKDSVEDIREKLHLIDDRRIFVIAEAIRRGITPEEINDITKIDLWFIDKIAILTEMEKRLSEEPLTKELMLEAKRMEFPDRVIAQFSGKTLEEVKKLRKEEYEIHAAFKTVDTCAAEFEAQTPYYYSCFDSENEVDATKTKKKVLVLGSGPIRIGQGIEFDYCSVHATWSMSKSGFETIIVNNNPETVSTDFDIADKLYFEPLTPEDVENIVDLEQPDGAVVQFGGQTAIKLTEALLKMGVPILGTSAENVDAAEDRELFDEILEKCCIPRPAGKTVFTTEEAIVAANQLGYPVLVRPSYVLGGAGMQIAICDDDVREFMEIINRNVQEHPILVDKYLMGKEVEVDAVCDGEDILIPGIMEHIERAGIHSGDSISVYPAQSISNKVQDVIVDYTRKLAKSLNVIGLINIQFIVYNEEVYVIEVNPRSSRTVPYISKVTNIPIVSLASKAVLGEKIADLGYGTGLAKKADYIAIKMPVFSFEKLRGADIGLGPEMKSTGECLGIAKTFNEALYKAFLGAGINLPKHKKMILTVKDADKLEAVSVGRRFKALGYEIYATRSTARVLKENGVDAIPVQKVDGESPTILDLLLGHEIDLVVDTPTQGRDKSRDGFVIRRMSIETGVTCLTSLDTANALLTSLENVADGELSLIDIARI</sequence>
<comment type="function">
    <text evidence="1">Large subunit of the glutamine-dependent carbamoyl phosphate synthetase (CPSase). CPSase catalyzes the formation of carbamoyl phosphate from the ammonia moiety of glutamine, carbonate, and phosphate donated by ATP, constituting the first step of 2 biosynthetic pathways, one leading to arginine and/or urea and the other to pyrimidine nucleotides. The large subunit (synthetase) binds the substrates ammonia (free or transferred from glutamine from the small subunit), hydrogencarbonate and ATP and carries out an ATP-coupled ligase reaction, activating hydrogencarbonate by forming carboxy phosphate which reacts with ammonia to form carbamoyl phosphate.</text>
</comment>
<comment type="catalytic activity">
    <reaction evidence="1">
        <text>hydrogencarbonate + L-glutamine + 2 ATP + H2O = carbamoyl phosphate + L-glutamate + 2 ADP + phosphate + 2 H(+)</text>
        <dbReference type="Rhea" id="RHEA:18633"/>
        <dbReference type="ChEBI" id="CHEBI:15377"/>
        <dbReference type="ChEBI" id="CHEBI:15378"/>
        <dbReference type="ChEBI" id="CHEBI:17544"/>
        <dbReference type="ChEBI" id="CHEBI:29985"/>
        <dbReference type="ChEBI" id="CHEBI:30616"/>
        <dbReference type="ChEBI" id="CHEBI:43474"/>
        <dbReference type="ChEBI" id="CHEBI:58228"/>
        <dbReference type="ChEBI" id="CHEBI:58359"/>
        <dbReference type="ChEBI" id="CHEBI:456216"/>
        <dbReference type="EC" id="6.3.5.5"/>
    </reaction>
</comment>
<comment type="catalytic activity">
    <molecule>Carbamoyl phosphate synthase large chain</molecule>
    <reaction evidence="1">
        <text>hydrogencarbonate + NH4(+) + 2 ATP = carbamoyl phosphate + 2 ADP + phosphate + 2 H(+)</text>
        <dbReference type="Rhea" id="RHEA:18029"/>
        <dbReference type="ChEBI" id="CHEBI:15378"/>
        <dbReference type="ChEBI" id="CHEBI:17544"/>
        <dbReference type="ChEBI" id="CHEBI:28938"/>
        <dbReference type="ChEBI" id="CHEBI:30616"/>
        <dbReference type="ChEBI" id="CHEBI:43474"/>
        <dbReference type="ChEBI" id="CHEBI:58228"/>
        <dbReference type="ChEBI" id="CHEBI:456216"/>
        <dbReference type="EC" id="6.3.4.16"/>
    </reaction>
</comment>
<comment type="cofactor">
    <cofactor evidence="1">
        <name>Mg(2+)</name>
        <dbReference type="ChEBI" id="CHEBI:18420"/>
    </cofactor>
    <cofactor evidence="1">
        <name>Mn(2+)</name>
        <dbReference type="ChEBI" id="CHEBI:29035"/>
    </cofactor>
    <text evidence="1">Binds 4 Mg(2+) or Mn(2+) ions per subunit.</text>
</comment>
<comment type="pathway">
    <text evidence="1">Amino-acid biosynthesis; L-arginine biosynthesis; carbamoyl phosphate from bicarbonate: step 1/1.</text>
</comment>
<comment type="pathway">
    <text evidence="1">Pyrimidine metabolism; UMP biosynthesis via de novo pathway; (S)-dihydroorotate from bicarbonate: step 1/3.</text>
</comment>
<comment type="subunit">
    <text evidence="1">Composed of two chains; the small (or glutamine) chain promotes the hydrolysis of glutamine to ammonia, which is used by the large (or ammonia) chain to synthesize carbamoyl phosphate. Tetramer of heterodimers (alpha,beta)4.</text>
</comment>
<comment type="domain">
    <text evidence="1">The large subunit is composed of 2 ATP-grasp domains that are involved in binding the 2 ATP molecules needed for carbamoyl phosphate synthesis. The N-terminal ATP-grasp domain (referred to as the carboxyphosphate synthetic component) catalyzes the ATP-dependent phosphorylation of hydrogencarbonate to carboxyphosphate and the subsequent nucleophilic attack by ammonia to form a carbamate intermediate. The C-terminal ATP-grasp domain (referred to as the carbamoyl phosphate synthetic component) then catalyzes the phosphorylation of carbamate with the second ATP to form the end product carbamoyl phosphate. The reactive and unstable enzyme intermediates are sequentially channeled from one active site to the next through the interior of the protein over a distance of at least 96 A.</text>
</comment>
<comment type="similarity">
    <text evidence="1">Belongs to the CarB family.</text>
</comment>
<reference key="1">
    <citation type="submission" date="2007-11" db="EMBL/GenBank/DDBJ databases">
        <title>Complete genome sequence of Clostridium phytofermentans ISDg.</title>
        <authorList>
            <person name="Leschine S.B."/>
            <person name="Warnick T.A."/>
            <person name="Blanchard J.L."/>
            <person name="Schnell D.J."/>
            <person name="Petit E.L."/>
            <person name="LaTouf W.G."/>
            <person name="Copeland A."/>
            <person name="Lucas S."/>
            <person name="Lapidus A."/>
            <person name="Barry K."/>
            <person name="Glavina del Rio T."/>
            <person name="Dalin E."/>
            <person name="Tice H."/>
            <person name="Pitluck S."/>
            <person name="Kiss H."/>
            <person name="Brettin T."/>
            <person name="Bruce D."/>
            <person name="Detter J.C."/>
            <person name="Han C."/>
            <person name="Kuske C."/>
            <person name="Schmutz J."/>
            <person name="Larimer F."/>
            <person name="Land M."/>
            <person name="Hauser L."/>
            <person name="Kyrpides N."/>
            <person name="Kim E.A."/>
            <person name="Richardson P."/>
        </authorList>
    </citation>
    <scope>NUCLEOTIDE SEQUENCE [LARGE SCALE GENOMIC DNA]</scope>
    <source>
        <strain>ATCC 700394 / DSM 18823 / ISDg</strain>
    </source>
</reference>
<organism>
    <name type="scientific">Lachnoclostridium phytofermentans (strain ATCC 700394 / DSM 18823 / ISDg)</name>
    <name type="common">Clostridium phytofermentans</name>
    <dbReference type="NCBI Taxonomy" id="357809"/>
    <lineage>
        <taxon>Bacteria</taxon>
        <taxon>Bacillati</taxon>
        <taxon>Bacillota</taxon>
        <taxon>Clostridia</taxon>
        <taxon>Lachnospirales</taxon>
        <taxon>Lachnospiraceae</taxon>
    </lineage>
</organism>